<evidence type="ECO:0000255" key="1">
    <source>
        <dbReference type="HAMAP-Rule" id="MF_00212"/>
    </source>
</evidence>
<sequence>MSQIPETSDIVLIGAGIMSATLGTVLKELEPSLSVTMLETLHDCGQESSQAWNNAGTGHAANCELNYTPQRPDGSVDITKALEVNTEFDISRQLWAHLVTKGAIPDPRAFLHPCPHMSFVWGDDNVAFLRQRHREMAAHHCYHGMEFSEDSAQIAAWAPLIIEGRKPGQPIAATRIISGADVDYGALTHLLVKQLQAQSGFSVHYKHRVVALARGDDGRWLVTVENVASAERTTISARFVFAGAGGGALDILQKSGIPEGNGYAGFPVSGIWLRCDVDDISVRHHAKVYGKAAHGSPPMSVPHLDTRIIGGKRSLLFGPYAGFSSKFLKHGSYADLLRSIEPGNILPMLAVARDDWQLSEYLIGQVLQTSEHQFAALQGFFPRAQREDWQRAVAGQRVQIIKPDPQHTGVLEFGTELVASADNSFVALLGASPGASTAAFIAMEVLQKCFDDRLTPDGWLGALKQMIPTYGIDLKQDAAACRDSRARTAKVLQLDFV</sequence>
<gene>
    <name evidence="1" type="primary">mqo</name>
    <name type="ordered locus">RPA1331</name>
</gene>
<feature type="chain" id="PRO_0000325512" description="Probable malate:quinone oxidoreductase">
    <location>
        <begin position="1"/>
        <end position="497"/>
    </location>
</feature>
<protein>
    <recommendedName>
        <fullName evidence="1">Probable malate:quinone oxidoreductase</fullName>
        <ecNumber evidence="1">1.1.5.4</ecNumber>
    </recommendedName>
    <alternativeName>
        <fullName evidence="1">MQO</fullName>
    </alternativeName>
    <alternativeName>
        <fullName evidence="1">Malate dehydrogenase [quinone]</fullName>
    </alternativeName>
</protein>
<keyword id="KW-0274">FAD</keyword>
<keyword id="KW-0285">Flavoprotein</keyword>
<keyword id="KW-0560">Oxidoreductase</keyword>
<keyword id="KW-0816">Tricarboxylic acid cycle</keyword>
<name>MQO_RHOPA</name>
<reference key="1">
    <citation type="journal article" date="2004" name="Nat. Biotechnol.">
        <title>Complete genome sequence of the metabolically versatile photosynthetic bacterium Rhodopseudomonas palustris.</title>
        <authorList>
            <person name="Larimer F.W."/>
            <person name="Chain P."/>
            <person name="Hauser L."/>
            <person name="Lamerdin J.E."/>
            <person name="Malfatti S."/>
            <person name="Do L."/>
            <person name="Land M.L."/>
            <person name="Pelletier D.A."/>
            <person name="Beatty J.T."/>
            <person name="Lang A.S."/>
            <person name="Tabita F.R."/>
            <person name="Gibson J.L."/>
            <person name="Hanson T.E."/>
            <person name="Bobst C."/>
            <person name="Torres y Torres J.L."/>
            <person name="Peres C."/>
            <person name="Harrison F.H."/>
            <person name="Gibson J."/>
            <person name="Harwood C.S."/>
        </authorList>
    </citation>
    <scope>NUCLEOTIDE SEQUENCE [LARGE SCALE GENOMIC DNA]</scope>
    <source>
        <strain>ATCC BAA-98 / CGA009</strain>
    </source>
</reference>
<comment type="catalytic activity">
    <reaction evidence="1">
        <text>(S)-malate + a quinone = a quinol + oxaloacetate</text>
        <dbReference type="Rhea" id="RHEA:46012"/>
        <dbReference type="ChEBI" id="CHEBI:15589"/>
        <dbReference type="ChEBI" id="CHEBI:16452"/>
        <dbReference type="ChEBI" id="CHEBI:24646"/>
        <dbReference type="ChEBI" id="CHEBI:132124"/>
        <dbReference type="EC" id="1.1.5.4"/>
    </reaction>
</comment>
<comment type="cofactor">
    <cofactor evidence="1">
        <name>FAD</name>
        <dbReference type="ChEBI" id="CHEBI:57692"/>
    </cofactor>
</comment>
<comment type="pathway">
    <text evidence="1">Carbohydrate metabolism; tricarboxylic acid cycle; oxaloacetate from (S)-malate (quinone route): step 1/1.</text>
</comment>
<comment type="similarity">
    <text evidence="1">Belongs to the MQO family.</text>
</comment>
<accession>Q6NA55</accession>
<organism>
    <name type="scientific">Rhodopseudomonas palustris (strain ATCC BAA-98 / CGA009)</name>
    <dbReference type="NCBI Taxonomy" id="258594"/>
    <lineage>
        <taxon>Bacteria</taxon>
        <taxon>Pseudomonadati</taxon>
        <taxon>Pseudomonadota</taxon>
        <taxon>Alphaproteobacteria</taxon>
        <taxon>Hyphomicrobiales</taxon>
        <taxon>Nitrobacteraceae</taxon>
        <taxon>Rhodopseudomonas</taxon>
    </lineage>
</organism>
<proteinExistence type="inferred from homology"/>
<dbReference type="EC" id="1.1.5.4" evidence="1"/>
<dbReference type="EMBL" id="BX572597">
    <property type="protein sequence ID" value="CAE26774.1"/>
    <property type="molecule type" value="Genomic_DNA"/>
</dbReference>
<dbReference type="RefSeq" id="WP_011156894.1">
    <property type="nucleotide sequence ID" value="NZ_CP116810.1"/>
</dbReference>
<dbReference type="SMR" id="Q6NA55"/>
<dbReference type="STRING" id="258594.RPA1331"/>
<dbReference type="GeneID" id="66892356"/>
<dbReference type="eggNOG" id="COG0579">
    <property type="taxonomic scope" value="Bacteria"/>
</dbReference>
<dbReference type="HOGENOM" id="CLU_028151_0_0_5"/>
<dbReference type="PhylomeDB" id="Q6NA55"/>
<dbReference type="UniPathway" id="UPA00223">
    <property type="reaction ID" value="UER01008"/>
</dbReference>
<dbReference type="GO" id="GO:0047545">
    <property type="term" value="F:2-hydroxyglutarate dehydrogenase activity"/>
    <property type="evidence" value="ECO:0007669"/>
    <property type="project" value="TreeGrafter"/>
</dbReference>
<dbReference type="GO" id="GO:0008924">
    <property type="term" value="F:L-malate dehydrogenase (quinone) activity"/>
    <property type="evidence" value="ECO:0007669"/>
    <property type="project" value="UniProtKB-UniRule"/>
</dbReference>
<dbReference type="GO" id="GO:0006099">
    <property type="term" value="P:tricarboxylic acid cycle"/>
    <property type="evidence" value="ECO:0007669"/>
    <property type="project" value="UniProtKB-UniRule"/>
</dbReference>
<dbReference type="Gene3D" id="3.30.9.10">
    <property type="entry name" value="D-Amino Acid Oxidase, subunit A, domain 2"/>
    <property type="match status" value="1"/>
</dbReference>
<dbReference type="Gene3D" id="3.50.50.60">
    <property type="entry name" value="FAD/NAD(P)-binding domain"/>
    <property type="match status" value="1"/>
</dbReference>
<dbReference type="HAMAP" id="MF_00212">
    <property type="entry name" value="MQO"/>
    <property type="match status" value="1"/>
</dbReference>
<dbReference type="InterPro" id="IPR036188">
    <property type="entry name" value="FAD/NAD-bd_sf"/>
</dbReference>
<dbReference type="InterPro" id="IPR006231">
    <property type="entry name" value="MQO"/>
</dbReference>
<dbReference type="NCBIfam" id="TIGR01320">
    <property type="entry name" value="mal_quin_oxido"/>
    <property type="match status" value="1"/>
</dbReference>
<dbReference type="NCBIfam" id="NF003603">
    <property type="entry name" value="PRK05257.1-1"/>
    <property type="match status" value="1"/>
</dbReference>
<dbReference type="NCBIfam" id="NF003605">
    <property type="entry name" value="PRK05257.1-4"/>
    <property type="match status" value="1"/>
</dbReference>
<dbReference type="NCBIfam" id="NF003606">
    <property type="entry name" value="PRK05257.2-1"/>
    <property type="match status" value="1"/>
</dbReference>
<dbReference type="NCBIfam" id="NF003608">
    <property type="entry name" value="PRK05257.2-4"/>
    <property type="match status" value="1"/>
</dbReference>
<dbReference type="NCBIfam" id="NF003611">
    <property type="entry name" value="PRK05257.3-2"/>
    <property type="match status" value="1"/>
</dbReference>
<dbReference type="NCBIfam" id="NF009875">
    <property type="entry name" value="PRK13339.1"/>
    <property type="match status" value="1"/>
</dbReference>
<dbReference type="PANTHER" id="PTHR43104">
    <property type="entry name" value="L-2-HYDROXYGLUTARATE DEHYDROGENASE, MITOCHONDRIAL"/>
    <property type="match status" value="1"/>
</dbReference>
<dbReference type="PANTHER" id="PTHR43104:SF2">
    <property type="entry name" value="L-2-HYDROXYGLUTARATE DEHYDROGENASE, MITOCHONDRIAL"/>
    <property type="match status" value="1"/>
</dbReference>
<dbReference type="Pfam" id="PF06039">
    <property type="entry name" value="Mqo"/>
    <property type="match status" value="1"/>
</dbReference>
<dbReference type="SUPFAM" id="SSF51905">
    <property type="entry name" value="FAD/NAD(P)-binding domain"/>
    <property type="match status" value="1"/>
</dbReference>